<comment type="function">
    <text>Probable ion channel inhibitor.</text>
</comment>
<comment type="subcellular location">
    <subcellularLocation>
        <location evidence="1">Secreted</location>
    </subcellularLocation>
</comment>
<comment type="tissue specificity">
    <text>Expressed by the venom gland.</text>
</comment>
<comment type="domain">
    <text evidence="2">The presence of a 'disulfide through disulfide knot' structurally defines this protein as a knottin.</text>
</comment>
<comment type="similarity">
    <text evidence="4">Belongs to the neurotoxin 10 (Hwtx-1) family. 28 (Jztx-11) subfamily.</text>
</comment>
<keyword id="KW-1015">Disulfide bond</keyword>
<keyword id="KW-0872">Ion channel impairing toxin</keyword>
<keyword id="KW-0960">Knottin</keyword>
<keyword id="KW-0964">Secreted</keyword>
<keyword id="KW-0732">Signal</keyword>
<keyword id="KW-0800">Toxin</keyword>
<name>JZT61_CHIGU</name>
<proteinExistence type="evidence at transcript level"/>
<dbReference type="EMBL" id="EU233902">
    <property type="protein sequence ID" value="ABY71721.1"/>
    <property type="molecule type" value="mRNA"/>
</dbReference>
<dbReference type="SMR" id="B1P1H1"/>
<dbReference type="ArachnoServer" id="AS000850">
    <property type="toxin name" value="kappa-theraphotoxin-Cg1d"/>
</dbReference>
<dbReference type="GO" id="GO:0005576">
    <property type="term" value="C:extracellular region"/>
    <property type="evidence" value="ECO:0007669"/>
    <property type="project" value="UniProtKB-SubCell"/>
</dbReference>
<dbReference type="GO" id="GO:0008200">
    <property type="term" value="F:ion channel inhibitor activity"/>
    <property type="evidence" value="ECO:0007669"/>
    <property type="project" value="InterPro"/>
</dbReference>
<dbReference type="GO" id="GO:0090729">
    <property type="term" value="F:toxin activity"/>
    <property type="evidence" value="ECO:0007669"/>
    <property type="project" value="UniProtKB-KW"/>
</dbReference>
<dbReference type="InterPro" id="IPR011696">
    <property type="entry name" value="Huwentoxin-1"/>
</dbReference>
<dbReference type="Pfam" id="PF07740">
    <property type="entry name" value="Toxin_12"/>
    <property type="match status" value="1"/>
</dbReference>
<dbReference type="SUPFAM" id="SSF57059">
    <property type="entry name" value="omega toxin-like"/>
    <property type="match status" value="1"/>
</dbReference>
<accession>B1P1H1</accession>
<evidence type="ECO:0000250" key="1"/>
<evidence type="ECO:0000250" key="2">
    <source>
        <dbReference type="UniProtKB" id="P0C247"/>
    </source>
</evidence>
<evidence type="ECO:0000255" key="3"/>
<evidence type="ECO:0000305" key="4"/>
<organism>
    <name type="scientific">Chilobrachys guangxiensis</name>
    <name type="common">Chinese earth tiger tarantula</name>
    <name type="synonym">Chilobrachys jingzhao</name>
    <dbReference type="NCBI Taxonomy" id="278060"/>
    <lineage>
        <taxon>Eukaryota</taxon>
        <taxon>Metazoa</taxon>
        <taxon>Ecdysozoa</taxon>
        <taxon>Arthropoda</taxon>
        <taxon>Chelicerata</taxon>
        <taxon>Arachnida</taxon>
        <taxon>Araneae</taxon>
        <taxon>Mygalomorphae</taxon>
        <taxon>Theraphosidae</taxon>
        <taxon>Chilobrachys</taxon>
    </lineage>
</organism>
<reference key="1">
    <citation type="journal article" date="2008" name="Cell. Mol. Life Sci.">
        <title>Molecular diversity and evolution of cystine knot toxins of the tarantula Chilobrachys jingzhao.</title>
        <authorList>
            <person name="Chen J."/>
            <person name="Deng M."/>
            <person name="He Q."/>
            <person name="Meng E."/>
            <person name="Jiang L."/>
            <person name="Liao Z."/>
            <person name="Rong M."/>
            <person name="Liang S."/>
        </authorList>
    </citation>
    <scope>NUCLEOTIDE SEQUENCE [LARGE SCALE MRNA]</scope>
    <source>
        <tissue>Venom gland</tissue>
    </source>
</reference>
<feature type="signal peptide" evidence="3">
    <location>
        <begin position="1"/>
        <end position="21"/>
    </location>
</feature>
<feature type="propeptide" id="PRO_0000398536" evidence="1">
    <location>
        <begin position="22"/>
        <end position="51"/>
    </location>
</feature>
<feature type="peptide" id="PRO_0000398537" description="Kappa-theraphotoxin-Cg1d">
    <location>
        <begin position="52"/>
        <end position="85"/>
    </location>
</feature>
<feature type="disulfide bond" evidence="2">
    <location>
        <begin position="52"/>
        <end position="66"/>
    </location>
</feature>
<feature type="disulfide bond" evidence="2">
    <location>
        <begin position="59"/>
        <end position="71"/>
    </location>
</feature>
<feature type="disulfide bond" evidence="2">
    <location>
        <begin position="65"/>
        <end position="78"/>
    </location>
</feature>
<sequence>MKVSVLITLAVLGVMFVWASAAELEERGSDQRDSPAWLKSMERIFQSEERECRKMFGGCSVDSDCCAHLGCKPTLKYCAWDLTFP</sequence>
<protein>
    <recommendedName>
        <fullName>Kappa-theraphotoxin-Cg1d</fullName>
        <shortName>Kappa-TRTX-Cg1d</shortName>
    </recommendedName>
    <alternativeName>
        <fullName>Jingzhaotoxin-61</fullName>
        <shortName>JZTX-61</shortName>
    </alternativeName>
</protein>